<proteinExistence type="inferred from homology"/>
<dbReference type="EC" id="1.2.1.72" evidence="1"/>
<dbReference type="EMBL" id="CP001139">
    <property type="protein sequence ID" value="ACH65226.1"/>
    <property type="molecule type" value="Genomic_DNA"/>
</dbReference>
<dbReference type="RefSeq" id="WP_012532906.1">
    <property type="nucleotide sequence ID" value="NC_011184.1"/>
</dbReference>
<dbReference type="SMR" id="B5F9T4"/>
<dbReference type="KEGG" id="vfm:VFMJ11_0441"/>
<dbReference type="HOGENOM" id="CLU_030140_0_2_6"/>
<dbReference type="UniPathway" id="UPA00244">
    <property type="reaction ID" value="UER00309"/>
</dbReference>
<dbReference type="Proteomes" id="UP000001857">
    <property type="component" value="Chromosome I"/>
</dbReference>
<dbReference type="GO" id="GO:0005737">
    <property type="term" value="C:cytoplasm"/>
    <property type="evidence" value="ECO:0007669"/>
    <property type="project" value="UniProtKB-SubCell"/>
</dbReference>
<dbReference type="GO" id="GO:0048001">
    <property type="term" value="F:erythrose-4-phosphate dehydrogenase activity"/>
    <property type="evidence" value="ECO:0007669"/>
    <property type="project" value="UniProtKB-UniRule"/>
</dbReference>
<dbReference type="GO" id="GO:0051287">
    <property type="term" value="F:NAD binding"/>
    <property type="evidence" value="ECO:0007669"/>
    <property type="project" value="InterPro"/>
</dbReference>
<dbReference type="GO" id="GO:0042823">
    <property type="term" value="P:pyridoxal phosphate biosynthetic process"/>
    <property type="evidence" value="ECO:0007669"/>
    <property type="project" value="UniProtKB-UniRule"/>
</dbReference>
<dbReference type="GO" id="GO:0008615">
    <property type="term" value="P:pyridoxine biosynthetic process"/>
    <property type="evidence" value="ECO:0007669"/>
    <property type="project" value="UniProtKB-UniRule"/>
</dbReference>
<dbReference type="CDD" id="cd23937">
    <property type="entry name" value="GAPDH_C_E4PDH"/>
    <property type="match status" value="1"/>
</dbReference>
<dbReference type="CDD" id="cd17892">
    <property type="entry name" value="GAPDH_N_E4PDH"/>
    <property type="match status" value="1"/>
</dbReference>
<dbReference type="FunFam" id="3.30.360.10:FF:000007">
    <property type="entry name" value="D-erythrose-4-phosphate dehydrogenase"/>
    <property type="match status" value="1"/>
</dbReference>
<dbReference type="FunFam" id="3.40.50.720:FF:000001">
    <property type="entry name" value="Glyceraldehyde-3-phosphate dehydrogenase"/>
    <property type="match status" value="1"/>
</dbReference>
<dbReference type="Gene3D" id="3.30.360.10">
    <property type="entry name" value="Dihydrodipicolinate Reductase, domain 2"/>
    <property type="match status" value="1"/>
</dbReference>
<dbReference type="Gene3D" id="3.40.50.720">
    <property type="entry name" value="NAD(P)-binding Rossmann-like Domain"/>
    <property type="match status" value="1"/>
</dbReference>
<dbReference type="HAMAP" id="MF_01640">
    <property type="entry name" value="E4P_dehydrog"/>
    <property type="match status" value="1"/>
</dbReference>
<dbReference type="InterPro" id="IPR006422">
    <property type="entry name" value="E4P_DH_bac"/>
</dbReference>
<dbReference type="InterPro" id="IPR020831">
    <property type="entry name" value="GlycerAld/Erythrose_P_DH"/>
</dbReference>
<dbReference type="InterPro" id="IPR020829">
    <property type="entry name" value="GlycerAld_3-P_DH_cat"/>
</dbReference>
<dbReference type="InterPro" id="IPR020828">
    <property type="entry name" value="GlycerAld_3-P_DH_NAD(P)-bd"/>
</dbReference>
<dbReference type="InterPro" id="IPR036291">
    <property type="entry name" value="NAD(P)-bd_dom_sf"/>
</dbReference>
<dbReference type="NCBIfam" id="TIGR01532">
    <property type="entry name" value="E4PD_g-proteo"/>
    <property type="match status" value="1"/>
</dbReference>
<dbReference type="NCBIfam" id="NF010058">
    <property type="entry name" value="PRK13535.1"/>
    <property type="match status" value="1"/>
</dbReference>
<dbReference type="PANTHER" id="PTHR43148">
    <property type="entry name" value="GLYCERALDEHYDE-3-PHOSPHATE DEHYDROGENASE 2"/>
    <property type="match status" value="1"/>
</dbReference>
<dbReference type="Pfam" id="PF02800">
    <property type="entry name" value="Gp_dh_C"/>
    <property type="match status" value="1"/>
</dbReference>
<dbReference type="Pfam" id="PF00044">
    <property type="entry name" value="Gp_dh_N"/>
    <property type="match status" value="1"/>
</dbReference>
<dbReference type="PIRSF" id="PIRSF000149">
    <property type="entry name" value="GAP_DH"/>
    <property type="match status" value="1"/>
</dbReference>
<dbReference type="PRINTS" id="PR00078">
    <property type="entry name" value="G3PDHDRGNASE"/>
</dbReference>
<dbReference type="SMART" id="SM00846">
    <property type="entry name" value="Gp_dh_N"/>
    <property type="match status" value="1"/>
</dbReference>
<dbReference type="SUPFAM" id="SSF55347">
    <property type="entry name" value="Glyceraldehyde-3-phosphate dehydrogenase-like, C-terminal domain"/>
    <property type="match status" value="1"/>
</dbReference>
<dbReference type="SUPFAM" id="SSF51735">
    <property type="entry name" value="NAD(P)-binding Rossmann-fold domains"/>
    <property type="match status" value="1"/>
</dbReference>
<comment type="function">
    <text evidence="1">Catalyzes the NAD-dependent conversion of D-erythrose 4-phosphate to 4-phosphoerythronate.</text>
</comment>
<comment type="catalytic activity">
    <reaction evidence="1">
        <text>D-erythrose 4-phosphate + NAD(+) + H2O = 4-phospho-D-erythronate + NADH + 2 H(+)</text>
        <dbReference type="Rhea" id="RHEA:12056"/>
        <dbReference type="ChEBI" id="CHEBI:15377"/>
        <dbReference type="ChEBI" id="CHEBI:15378"/>
        <dbReference type="ChEBI" id="CHEBI:16897"/>
        <dbReference type="ChEBI" id="CHEBI:57540"/>
        <dbReference type="ChEBI" id="CHEBI:57945"/>
        <dbReference type="ChEBI" id="CHEBI:58766"/>
        <dbReference type="EC" id="1.2.1.72"/>
    </reaction>
</comment>
<comment type="pathway">
    <text evidence="1">Cofactor biosynthesis; pyridoxine 5'-phosphate biosynthesis; pyridoxine 5'-phosphate from D-erythrose 4-phosphate: step 1/5.</text>
</comment>
<comment type="subunit">
    <text evidence="1">Homotetramer.</text>
</comment>
<comment type="subcellular location">
    <subcellularLocation>
        <location evidence="1">Cytoplasm</location>
    </subcellularLocation>
</comment>
<comment type="similarity">
    <text evidence="1">Belongs to the glyceraldehyde-3-phosphate dehydrogenase family. Epd subfamily.</text>
</comment>
<protein>
    <recommendedName>
        <fullName evidence="1">D-erythrose-4-phosphate dehydrogenase</fullName>
        <shortName evidence="1">E4PDH</shortName>
        <ecNumber evidence="1">1.2.1.72</ecNumber>
    </recommendedName>
</protein>
<reference key="1">
    <citation type="submission" date="2008-08" db="EMBL/GenBank/DDBJ databases">
        <title>Complete sequence of Vibrio fischeri strain MJ11.</title>
        <authorList>
            <person name="Mandel M.J."/>
            <person name="Stabb E.V."/>
            <person name="Ruby E.G."/>
            <person name="Ferriera S."/>
            <person name="Johnson J."/>
            <person name="Kravitz S."/>
            <person name="Beeson K."/>
            <person name="Sutton G."/>
            <person name="Rogers Y.-H."/>
            <person name="Friedman R."/>
            <person name="Frazier M."/>
            <person name="Venter J.C."/>
        </authorList>
    </citation>
    <scope>NUCLEOTIDE SEQUENCE [LARGE SCALE GENOMIC DNA]</scope>
    <source>
        <strain>MJ11</strain>
    </source>
</reference>
<gene>
    <name evidence="1" type="primary">epd</name>
    <name type="ordered locus">VFMJ11_0441</name>
</gene>
<organism>
    <name type="scientific">Aliivibrio fischeri (strain MJ11)</name>
    <name type="common">Vibrio fischeri</name>
    <dbReference type="NCBI Taxonomy" id="388396"/>
    <lineage>
        <taxon>Bacteria</taxon>
        <taxon>Pseudomonadati</taxon>
        <taxon>Pseudomonadota</taxon>
        <taxon>Gammaproteobacteria</taxon>
        <taxon>Vibrionales</taxon>
        <taxon>Vibrionaceae</taxon>
        <taxon>Aliivibrio</taxon>
    </lineage>
</organism>
<name>E4PD_ALIFM</name>
<evidence type="ECO:0000255" key="1">
    <source>
        <dbReference type="HAMAP-Rule" id="MF_01640"/>
    </source>
</evidence>
<keyword id="KW-0963">Cytoplasm</keyword>
<keyword id="KW-0520">NAD</keyword>
<keyword id="KW-0560">Oxidoreductase</keyword>
<keyword id="KW-0664">Pyridoxine biosynthesis</keyword>
<feature type="chain" id="PRO_1000186844" description="D-erythrose-4-phosphate dehydrogenase">
    <location>
        <begin position="1"/>
        <end position="339"/>
    </location>
</feature>
<feature type="active site" description="Nucleophile" evidence="1">
    <location>
        <position position="159"/>
    </location>
</feature>
<feature type="binding site" evidence="1">
    <location>
        <begin position="11"/>
        <end position="12"/>
    </location>
    <ligand>
        <name>NAD(+)</name>
        <dbReference type="ChEBI" id="CHEBI:57540"/>
    </ligand>
</feature>
<feature type="binding site" evidence="1">
    <location>
        <begin position="158"/>
        <end position="160"/>
    </location>
    <ligand>
        <name>substrate</name>
    </ligand>
</feature>
<feature type="binding site" evidence="1">
    <location>
        <position position="204"/>
    </location>
    <ligand>
        <name>substrate</name>
    </ligand>
</feature>
<feature type="binding site" evidence="1">
    <location>
        <begin position="217"/>
        <end position="218"/>
    </location>
    <ligand>
        <name>substrate</name>
    </ligand>
</feature>
<feature type="binding site" evidence="1">
    <location>
        <position position="240"/>
    </location>
    <ligand>
        <name>substrate</name>
    </ligand>
</feature>
<feature type="binding site" evidence="1">
    <location>
        <position position="322"/>
    </location>
    <ligand>
        <name>NAD(+)</name>
        <dbReference type="ChEBI" id="CHEBI:57540"/>
    </ligand>
</feature>
<feature type="site" description="Activates thiol group during catalysis" evidence="1">
    <location>
        <position position="186"/>
    </location>
</feature>
<accession>B5F9T4</accession>
<sequence length="339" mass="37640">MLRVAINGFGRIGRSVLRALYESDKRDKIEVVAVNELSQPEAMAHLFQYDSTHGRFQHKVTHDQEYLYIDLPNGSQDKVRILHQADLSLLPWQSLEVDLILDCTGVYGSKADGEKHINAGAKKVLFSHPGGSDLDNTIIYGVNHDTLLPEHRIVSNGSCTTNCIIPVIKAIDDAFGIDSGTITTIHSSMNDQQVIDAYHSDLRRTRAASQSIIPVDTKLHKGIERIFPKFSNKFEAISVRVPTVNVTAMDLSVTINTNVKVNDINQTIVNASRCTLHNIVDYTEAPLVSIDFNHDPHSAIVDGSQTRVSNGHLVKMLVWCDNEWGFANRMLDTALAMSK</sequence>